<keyword id="KW-0129">CBS domain</keyword>
<keyword id="KW-0332">GMP biosynthesis</keyword>
<keyword id="KW-0479">Metal-binding</keyword>
<keyword id="KW-0520">NAD</keyword>
<keyword id="KW-0560">Oxidoreductase</keyword>
<keyword id="KW-0630">Potassium</keyword>
<keyword id="KW-0658">Purine biosynthesis</keyword>
<keyword id="KW-0677">Repeat</keyword>
<gene>
    <name evidence="1" type="primary">guaB</name>
    <name type="ordered locus">SAB0340</name>
</gene>
<dbReference type="EC" id="1.1.1.205" evidence="1"/>
<dbReference type="EMBL" id="AJ938182">
    <property type="protein sequence ID" value="CAI80028.1"/>
    <property type="molecule type" value="Genomic_DNA"/>
</dbReference>
<dbReference type="RefSeq" id="WP_000264071.1">
    <property type="nucleotide sequence ID" value="NC_007622.1"/>
</dbReference>
<dbReference type="SMR" id="Q2YVL6"/>
<dbReference type="GeneID" id="66838696"/>
<dbReference type="KEGG" id="sab:SAB0340"/>
<dbReference type="HOGENOM" id="CLU_022552_1_0_9"/>
<dbReference type="UniPathway" id="UPA00601">
    <property type="reaction ID" value="UER00295"/>
</dbReference>
<dbReference type="GO" id="GO:0003938">
    <property type="term" value="F:IMP dehydrogenase activity"/>
    <property type="evidence" value="ECO:0007669"/>
    <property type="project" value="UniProtKB-UniRule"/>
</dbReference>
<dbReference type="GO" id="GO:0046872">
    <property type="term" value="F:metal ion binding"/>
    <property type="evidence" value="ECO:0007669"/>
    <property type="project" value="UniProtKB-UniRule"/>
</dbReference>
<dbReference type="GO" id="GO:0000166">
    <property type="term" value="F:nucleotide binding"/>
    <property type="evidence" value="ECO:0007669"/>
    <property type="project" value="UniProtKB-UniRule"/>
</dbReference>
<dbReference type="GO" id="GO:0006177">
    <property type="term" value="P:GMP biosynthetic process"/>
    <property type="evidence" value="ECO:0007669"/>
    <property type="project" value="UniProtKB-UniRule"/>
</dbReference>
<dbReference type="GO" id="GO:0006183">
    <property type="term" value="P:GTP biosynthetic process"/>
    <property type="evidence" value="ECO:0007669"/>
    <property type="project" value="TreeGrafter"/>
</dbReference>
<dbReference type="CDD" id="cd04601">
    <property type="entry name" value="CBS_pair_IMPDH"/>
    <property type="match status" value="1"/>
</dbReference>
<dbReference type="CDD" id="cd00381">
    <property type="entry name" value="IMPDH"/>
    <property type="match status" value="1"/>
</dbReference>
<dbReference type="FunFam" id="3.20.20.70:FF:000003">
    <property type="entry name" value="GMP reductase"/>
    <property type="match status" value="1"/>
</dbReference>
<dbReference type="Gene3D" id="3.20.20.70">
    <property type="entry name" value="Aldolase class I"/>
    <property type="match status" value="1"/>
</dbReference>
<dbReference type="HAMAP" id="MF_01964">
    <property type="entry name" value="IMPDH"/>
    <property type="match status" value="1"/>
</dbReference>
<dbReference type="InterPro" id="IPR013785">
    <property type="entry name" value="Aldolase_TIM"/>
</dbReference>
<dbReference type="InterPro" id="IPR000644">
    <property type="entry name" value="CBS_dom"/>
</dbReference>
<dbReference type="InterPro" id="IPR046342">
    <property type="entry name" value="CBS_dom_sf"/>
</dbReference>
<dbReference type="InterPro" id="IPR005990">
    <property type="entry name" value="IMP_DH"/>
</dbReference>
<dbReference type="InterPro" id="IPR015875">
    <property type="entry name" value="IMP_DH/GMP_Rdtase_CS"/>
</dbReference>
<dbReference type="InterPro" id="IPR001093">
    <property type="entry name" value="IMP_DH_GMPRt"/>
</dbReference>
<dbReference type="NCBIfam" id="TIGR01302">
    <property type="entry name" value="IMP_dehydrog"/>
    <property type="match status" value="1"/>
</dbReference>
<dbReference type="PANTHER" id="PTHR11911:SF111">
    <property type="entry name" value="INOSINE-5'-MONOPHOSPHATE DEHYDROGENASE"/>
    <property type="match status" value="1"/>
</dbReference>
<dbReference type="PANTHER" id="PTHR11911">
    <property type="entry name" value="INOSINE-5-MONOPHOSPHATE DEHYDROGENASE RELATED"/>
    <property type="match status" value="1"/>
</dbReference>
<dbReference type="Pfam" id="PF00571">
    <property type="entry name" value="CBS"/>
    <property type="match status" value="2"/>
</dbReference>
<dbReference type="Pfam" id="PF00478">
    <property type="entry name" value="IMPDH"/>
    <property type="match status" value="1"/>
</dbReference>
<dbReference type="PIRSF" id="PIRSF000130">
    <property type="entry name" value="IMPDH"/>
    <property type="match status" value="1"/>
</dbReference>
<dbReference type="SMART" id="SM00116">
    <property type="entry name" value="CBS"/>
    <property type="match status" value="2"/>
</dbReference>
<dbReference type="SMART" id="SM01240">
    <property type="entry name" value="IMPDH"/>
    <property type="match status" value="1"/>
</dbReference>
<dbReference type="SUPFAM" id="SSF54631">
    <property type="entry name" value="CBS-domain pair"/>
    <property type="match status" value="1"/>
</dbReference>
<dbReference type="SUPFAM" id="SSF51412">
    <property type="entry name" value="Inosine monophosphate dehydrogenase (IMPDH)"/>
    <property type="match status" value="1"/>
</dbReference>
<dbReference type="PROSITE" id="PS51371">
    <property type="entry name" value="CBS"/>
    <property type="match status" value="2"/>
</dbReference>
<dbReference type="PROSITE" id="PS00487">
    <property type="entry name" value="IMP_DH_GMP_RED"/>
    <property type="match status" value="1"/>
</dbReference>
<evidence type="ECO:0000255" key="1">
    <source>
        <dbReference type="HAMAP-Rule" id="MF_01964"/>
    </source>
</evidence>
<evidence type="ECO:0000256" key="2">
    <source>
        <dbReference type="SAM" id="MobiDB-lite"/>
    </source>
</evidence>
<accession>Q2YVL6</accession>
<protein>
    <recommendedName>
        <fullName evidence="1">Inosine-5'-monophosphate dehydrogenase</fullName>
        <shortName evidence="1">IMP dehydrogenase</shortName>
        <shortName evidence="1">IMPD</shortName>
        <shortName evidence="1">IMPDH</shortName>
        <ecNumber evidence="1">1.1.1.205</ecNumber>
    </recommendedName>
</protein>
<comment type="function">
    <text evidence="1">Catalyzes the conversion of inosine 5'-phosphate (IMP) to xanthosine 5'-phosphate (XMP), the first committed and rate-limiting step in the de novo synthesis of guanine nucleotides, and therefore plays an important role in the regulation of cell growth.</text>
</comment>
<comment type="catalytic activity">
    <reaction evidence="1">
        <text>IMP + NAD(+) + H2O = XMP + NADH + H(+)</text>
        <dbReference type="Rhea" id="RHEA:11708"/>
        <dbReference type="ChEBI" id="CHEBI:15377"/>
        <dbReference type="ChEBI" id="CHEBI:15378"/>
        <dbReference type="ChEBI" id="CHEBI:57464"/>
        <dbReference type="ChEBI" id="CHEBI:57540"/>
        <dbReference type="ChEBI" id="CHEBI:57945"/>
        <dbReference type="ChEBI" id="CHEBI:58053"/>
        <dbReference type="EC" id="1.1.1.205"/>
    </reaction>
</comment>
<comment type="cofactor">
    <cofactor evidence="1">
        <name>K(+)</name>
        <dbReference type="ChEBI" id="CHEBI:29103"/>
    </cofactor>
</comment>
<comment type="activity regulation">
    <text evidence="1">Mycophenolic acid (MPA) is a non-competitive inhibitor that prevents formation of the closed enzyme conformation by binding to the same site as the amobile flap. In contrast, mizoribine monophosphate (MZP) is a competitive inhibitor that induces the closed conformation. MPA is a potent inhibitor of mammalian IMPDHs but a poor inhibitor of the bacterial enzymes. MZP is a more potent inhibitor of bacterial IMPDH.</text>
</comment>
<comment type="pathway">
    <text evidence="1">Purine metabolism; XMP biosynthesis via de novo pathway; XMP from IMP: step 1/1.</text>
</comment>
<comment type="subunit">
    <text evidence="1">Homotetramer.</text>
</comment>
<comment type="similarity">
    <text evidence="1">Belongs to the IMPDH/GMPR family.</text>
</comment>
<sequence length="488" mass="52851">MWESKFAKESLTFDDVLLIPAQSDILPKDVDLSVQLSDKVKLNIPVISAGMDTVTESKMAIAMARQGGLGVIHKNMGVEEQADEVQKVKRSENGVISNPFFLTPEESVYEAEALMGKYRISGVPIVDNKEDRNLVGILTNRDLRFIEDFSIKIVDVMTQENLITAPVNTTLEEAEKILQKHKIEKLPLVKDGRLEGLITIKDIEKVIEFPNAAKDEHGRLLVAAAIGISKDTDIRAQKLVEAGVDVLVIDTAHGHSKGVIDQVKHIKKTYPEITLVAGNVATAEATKDLFEAGADIVKVGIGPGSICTTRVVAGVGVPQITAIYDCATEARKHGKAIIADGGIKFSGDIIKALAAGGHAVMLGSLLAGTEESPGATEIFQGRQYKVYRGMGSLGAMEKGSNDRYFQEDKAPKKFVPEGIEGRTAYKGALQDTIYQLMGGVRAGMGYTGSHDLRELREEAQFTRMGPAGLAESHPHNIQITKESPNYSF</sequence>
<name>IMDH_STAAB</name>
<reference key="1">
    <citation type="journal article" date="2007" name="PLoS ONE">
        <title>Molecular correlates of host specialization in Staphylococcus aureus.</title>
        <authorList>
            <person name="Herron-Olson L."/>
            <person name="Fitzgerald J.R."/>
            <person name="Musser J.M."/>
            <person name="Kapur V."/>
        </authorList>
    </citation>
    <scope>NUCLEOTIDE SEQUENCE [LARGE SCALE GENOMIC DNA]</scope>
    <source>
        <strain>bovine RF122 / ET3-1</strain>
    </source>
</reference>
<proteinExistence type="inferred from homology"/>
<organism>
    <name type="scientific">Staphylococcus aureus (strain bovine RF122 / ET3-1)</name>
    <dbReference type="NCBI Taxonomy" id="273036"/>
    <lineage>
        <taxon>Bacteria</taxon>
        <taxon>Bacillati</taxon>
        <taxon>Bacillota</taxon>
        <taxon>Bacilli</taxon>
        <taxon>Bacillales</taxon>
        <taxon>Staphylococcaceae</taxon>
        <taxon>Staphylococcus</taxon>
    </lineage>
</organism>
<feature type="chain" id="PRO_0000287359" description="Inosine-5'-monophosphate dehydrogenase">
    <location>
        <begin position="1"/>
        <end position="488"/>
    </location>
</feature>
<feature type="domain" description="CBS 1" evidence="1">
    <location>
        <begin position="95"/>
        <end position="153"/>
    </location>
</feature>
<feature type="domain" description="CBS 2" evidence="1">
    <location>
        <begin position="157"/>
        <end position="216"/>
    </location>
</feature>
<feature type="region of interest" description="Disordered" evidence="2">
    <location>
        <begin position="468"/>
        <end position="488"/>
    </location>
</feature>
<feature type="compositionally biased region" description="Polar residues" evidence="2">
    <location>
        <begin position="475"/>
        <end position="488"/>
    </location>
</feature>
<feature type="active site" description="Thioimidate intermediate" evidence="1">
    <location>
        <position position="307"/>
    </location>
</feature>
<feature type="active site" description="Proton acceptor" evidence="1">
    <location>
        <position position="403"/>
    </location>
</feature>
<feature type="binding site" evidence="1">
    <location>
        <position position="250"/>
    </location>
    <ligand>
        <name>NAD(+)</name>
        <dbReference type="ChEBI" id="CHEBI:57540"/>
    </ligand>
</feature>
<feature type="binding site" evidence="1">
    <location>
        <begin position="300"/>
        <end position="302"/>
    </location>
    <ligand>
        <name>NAD(+)</name>
        <dbReference type="ChEBI" id="CHEBI:57540"/>
    </ligand>
</feature>
<feature type="binding site" description="in other chain" evidence="1">
    <location>
        <position position="302"/>
    </location>
    <ligand>
        <name>K(+)</name>
        <dbReference type="ChEBI" id="CHEBI:29103"/>
        <note>ligand shared between two tetrameric partners</note>
    </ligand>
</feature>
<feature type="binding site" description="in other chain" evidence="1">
    <location>
        <position position="304"/>
    </location>
    <ligand>
        <name>K(+)</name>
        <dbReference type="ChEBI" id="CHEBI:29103"/>
        <note>ligand shared between two tetrameric partners</note>
    </ligand>
</feature>
<feature type="binding site" evidence="1">
    <location>
        <position position="305"/>
    </location>
    <ligand>
        <name>IMP</name>
        <dbReference type="ChEBI" id="CHEBI:58053"/>
    </ligand>
</feature>
<feature type="binding site" description="in other chain" evidence="1">
    <location>
        <position position="307"/>
    </location>
    <ligand>
        <name>K(+)</name>
        <dbReference type="ChEBI" id="CHEBI:29103"/>
        <note>ligand shared between two tetrameric partners</note>
    </ligand>
</feature>
<feature type="binding site" evidence="1">
    <location>
        <begin position="340"/>
        <end position="342"/>
    </location>
    <ligand>
        <name>IMP</name>
        <dbReference type="ChEBI" id="CHEBI:58053"/>
    </ligand>
</feature>
<feature type="binding site" evidence="1">
    <location>
        <begin position="363"/>
        <end position="364"/>
    </location>
    <ligand>
        <name>IMP</name>
        <dbReference type="ChEBI" id="CHEBI:58053"/>
    </ligand>
</feature>
<feature type="binding site" evidence="1">
    <location>
        <begin position="387"/>
        <end position="391"/>
    </location>
    <ligand>
        <name>IMP</name>
        <dbReference type="ChEBI" id="CHEBI:58053"/>
    </ligand>
</feature>
<feature type="binding site" evidence="1">
    <location>
        <position position="417"/>
    </location>
    <ligand>
        <name>IMP</name>
        <dbReference type="ChEBI" id="CHEBI:58053"/>
    </ligand>
</feature>
<feature type="binding site" evidence="1">
    <location>
        <position position="471"/>
    </location>
    <ligand>
        <name>K(+)</name>
        <dbReference type="ChEBI" id="CHEBI:29103"/>
        <note>ligand shared between two tetrameric partners</note>
    </ligand>
</feature>
<feature type="binding site" evidence="1">
    <location>
        <position position="472"/>
    </location>
    <ligand>
        <name>K(+)</name>
        <dbReference type="ChEBI" id="CHEBI:29103"/>
        <note>ligand shared between two tetrameric partners</note>
    </ligand>
</feature>
<feature type="binding site" evidence="1">
    <location>
        <position position="473"/>
    </location>
    <ligand>
        <name>K(+)</name>
        <dbReference type="ChEBI" id="CHEBI:29103"/>
        <note>ligand shared between two tetrameric partners</note>
    </ligand>
</feature>